<comment type="function">
    <text evidence="1">Attaches a formyl group to the free amino group of methionyl-tRNA(fMet). The formyl group appears to play a dual role in the initiator identity of N-formylmethionyl-tRNA by promoting its recognition by IF2 and preventing the misappropriation of this tRNA by the elongation apparatus.</text>
</comment>
<comment type="catalytic activity">
    <reaction evidence="1">
        <text>L-methionyl-tRNA(fMet) + (6R)-10-formyltetrahydrofolate = N-formyl-L-methionyl-tRNA(fMet) + (6S)-5,6,7,8-tetrahydrofolate + H(+)</text>
        <dbReference type="Rhea" id="RHEA:24380"/>
        <dbReference type="Rhea" id="RHEA-COMP:9952"/>
        <dbReference type="Rhea" id="RHEA-COMP:9953"/>
        <dbReference type="ChEBI" id="CHEBI:15378"/>
        <dbReference type="ChEBI" id="CHEBI:57453"/>
        <dbReference type="ChEBI" id="CHEBI:78530"/>
        <dbReference type="ChEBI" id="CHEBI:78844"/>
        <dbReference type="ChEBI" id="CHEBI:195366"/>
        <dbReference type="EC" id="2.1.2.9"/>
    </reaction>
</comment>
<comment type="similarity">
    <text evidence="1">Belongs to the Fmt family.</text>
</comment>
<evidence type="ECO:0000255" key="1">
    <source>
        <dbReference type="HAMAP-Rule" id="MF_00182"/>
    </source>
</evidence>
<feature type="chain" id="PRO_1000020066" description="Methionyl-tRNA formyltransferase">
    <location>
        <begin position="1"/>
        <end position="313"/>
    </location>
</feature>
<feature type="binding site" evidence="1">
    <location>
        <begin position="113"/>
        <end position="116"/>
    </location>
    <ligand>
        <name>(6S)-5,6,7,8-tetrahydrofolate</name>
        <dbReference type="ChEBI" id="CHEBI:57453"/>
    </ligand>
</feature>
<reference key="1">
    <citation type="journal article" date="2007" name="Genome Biol.">
        <title>Comparison of Francisella tularensis genomes reveals evolutionary events associated with the emergence of human pathogenic strains.</title>
        <authorList>
            <person name="Rohmer L."/>
            <person name="Fong C."/>
            <person name="Abmayr S."/>
            <person name="Wasnick M."/>
            <person name="Larson Freeman T.J."/>
            <person name="Radey M."/>
            <person name="Guina T."/>
            <person name="Svensson K."/>
            <person name="Hayden H.S."/>
            <person name="Jacobs M."/>
            <person name="Gallagher L.A."/>
            <person name="Manoil C."/>
            <person name="Ernst R.K."/>
            <person name="Drees B."/>
            <person name="Buckley D."/>
            <person name="Haugen E."/>
            <person name="Bovee D."/>
            <person name="Zhou Y."/>
            <person name="Chang J."/>
            <person name="Levy R."/>
            <person name="Lim R."/>
            <person name="Gillett W."/>
            <person name="Guenthener D."/>
            <person name="Kang A."/>
            <person name="Shaffer S.A."/>
            <person name="Taylor G."/>
            <person name="Chen J."/>
            <person name="Gallis B."/>
            <person name="D'Argenio D.A."/>
            <person name="Forsman M."/>
            <person name="Olson M.V."/>
            <person name="Goodlett D.R."/>
            <person name="Kaul R."/>
            <person name="Miller S.I."/>
            <person name="Brittnacher M.J."/>
        </authorList>
    </citation>
    <scope>NUCLEOTIDE SEQUENCE [LARGE SCALE GENOMIC DNA]</scope>
    <source>
        <strain>U112</strain>
    </source>
</reference>
<keyword id="KW-0648">Protein biosynthesis</keyword>
<keyword id="KW-0808">Transferase</keyword>
<gene>
    <name evidence="1" type="primary">fmt</name>
    <name type="ordered locus">FTN_0803</name>
</gene>
<dbReference type="EC" id="2.1.2.9" evidence="1"/>
<dbReference type="EMBL" id="CP000439">
    <property type="protein sequence ID" value="ABK89691.1"/>
    <property type="molecule type" value="Genomic_DNA"/>
</dbReference>
<dbReference type="RefSeq" id="WP_003038998.1">
    <property type="nucleotide sequence ID" value="NC_008601.1"/>
</dbReference>
<dbReference type="SMR" id="A0Q626"/>
<dbReference type="KEGG" id="ftn:FTN_0803"/>
<dbReference type="KEGG" id="ftx:AW25_1216"/>
<dbReference type="BioCyc" id="FTUL401614:G1G75-839-MONOMER"/>
<dbReference type="Proteomes" id="UP000000762">
    <property type="component" value="Chromosome"/>
</dbReference>
<dbReference type="GO" id="GO:0005829">
    <property type="term" value="C:cytosol"/>
    <property type="evidence" value="ECO:0007669"/>
    <property type="project" value="TreeGrafter"/>
</dbReference>
<dbReference type="GO" id="GO:0004479">
    <property type="term" value="F:methionyl-tRNA formyltransferase activity"/>
    <property type="evidence" value="ECO:0007669"/>
    <property type="project" value="UniProtKB-UniRule"/>
</dbReference>
<dbReference type="CDD" id="cd08646">
    <property type="entry name" value="FMT_core_Met-tRNA-FMT_N"/>
    <property type="match status" value="1"/>
</dbReference>
<dbReference type="CDD" id="cd08704">
    <property type="entry name" value="Met_tRNA_FMT_C"/>
    <property type="match status" value="1"/>
</dbReference>
<dbReference type="Gene3D" id="3.10.25.10">
    <property type="entry name" value="Formyl transferase, C-terminal domain"/>
    <property type="match status" value="1"/>
</dbReference>
<dbReference type="Gene3D" id="3.40.50.170">
    <property type="entry name" value="Formyl transferase, N-terminal domain"/>
    <property type="match status" value="1"/>
</dbReference>
<dbReference type="HAMAP" id="MF_00182">
    <property type="entry name" value="Formyl_trans"/>
    <property type="match status" value="1"/>
</dbReference>
<dbReference type="InterPro" id="IPR005794">
    <property type="entry name" value="Fmt"/>
</dbReference>
<dbReference type="InterPro" id="IPR005793">
    <property type="entry name" value="Formyl_trans_C"/>
</dbReference>
<dbReference type="InterPro" id="IPR037022">
    <property type="entry name" value="Formyl_trans_C_sf"/>
</dbReference>
<dbReference type="InterPro" id="IPR002376">
    <property type="entry name" value="Formyl_transf_N"/>
</dbReference>
<dbReference type="InterPro" id="IPR036477">
    <property type="entry name" value="Formyl_transf_N_sf"/>
</dbReference>
<dbReference type="InterPro" id="IPR011034">
    <property type="entry name" value="Formyl_transferase-like_C_sf"/>
</dbReference>
<dbReference type="InterPro" id="IPR001555">
    <property type="entry name" value="GART_AS"/>
</dbReference>
<dbReference type="InterPro" id="IPR044135">
    <property type="entry name" value="Met-tRNA-FMT_C"/>
</dbReference>
<dbReference type="InterPro" id="IPR041711">
    <property type="entry name" value="Met-tRNA-FMT_N"/>
</dbReference>
<dbReference type="NCBIfam" id="TIGR00460">
    <property type="entry name" value="fmt"/>
    <property type="match status" value="1"/>
</dbReference>
<dbReference type="PANTHER" id="PTHR11138">
    <property type="entry name" value="METHIONYL-TRNA FORMYLTRANSFERASE"/>
    <property type="match status" value="1"/>
</dbReference>
<dbReference type="PANTHER" id="PTHR11138:SF5">
    <property type="entry name" value="METHIONYL-TRNA FORMYLTRANSFERASE, MITOCHONDRIAL"/>
    <property type="match status" value="1"/>
</dbReference>
<dbReference type="Pfam" id="PF02911">
    <property type="entry name" value="Formyl_trans_C"/>
    <property type="match status" value="1"/>
</dbReference>
<dbReference type="Pfam" id="PF00551">
    <property type="entry name" value="Formyl_trans_N"/>
    <property type="match status" value="1"/>
</dbReference>
<dbReference type="SUPFAM" id="SSF50486">
    <property type="entry name" value="FMT C-terminal domain-like"/>
    <property type="match status" value="1"/>
</dbReference>
<dbReference type="SUPFAM" id="SSF53328">
    <property type="entry name" value="Formyltransferase"/>
    <property type="match status" value="1"/>
</dbReference>
<dbReference type="PROSITE" id="PS00373">
    <property type="entry name" value="GART"/>
    <property type="match status" value="1"/>
</dbReference>
<proteinExistence type="inferred from homology"/>
<protein>
    <recommendedName>
        <fullName evidence="1">Methionyl-tRNA formyltransferase</fullName>
        <ecNumber evidence="1">2.1.2.9</ecNumber>
    </recommendedName>
</protein>
<organism>
    <name type="scientific">Francisella tularensis subsp. novicida (strain U112)</name>
    <dbReference type="NCBI Taxonomy" id="401614"/>
    <lineage>
        <taxon>Bacteria</taxon>
        <taxon>Pseudomonadati</taxon>
        <taxon>Pseudomonadota</taxon>
        <taxon>Gammaproteobacteria</taxon>
        <taxon>Thiotrichales</taxon>
        <taxon>Francisellaceae</taxon>
        <taxon>Francisella</taxon>
    </lineage>
</organism>
<accession>A0Q626</accession>
<name>FMT_FRATN</name>
<sequence>MKKLNIIFAGTPDISAQVLKDLYKSQHNIQAVLTQPDRAKGRGKKVQFSPVKEVALANHTPVFQPLSFKKNPEVLEQIKQLKPDVIVVIAYGIIVPQEFLDIARYGCLNIHVSLLPKWRGAAPIQRAIQAGDTKTGICIMQMDAGLDTGDILNTLEIEIQETDTSQTLHDKFAKLSIKPLLETLEKIEIIKPEPQQGEPSYAHKITKQEGLIDFTKSAWQISCHIRAFTPWPGAYFILDDEAIKVGEFEILYQNTDNRKAGTIIDIDRSGFDIATSDKIIRFRQLQFPNKKMLNIVDILNGKDLDKYIGYKLG</sequence>